<accession>B7L9A7</accession>
<comment type="function">
    <text evidence="1">Involved in the aerobic and anaerobic degradation of long-chain fatty acids via beta-oxidation cycle. Catalyzes the formation of 3-oxoacyl-CoA from enoyl-CoA via L-3-hydroxyacyl-CoA. It can also use D-3-hydroxyacyl-CoA and cis-3-enoyl-CoA as substrate.</text>
</comment>
<comment type="catalytic activity">
    <reaction evidence="1">
        <text>a (3S)-3-hydroxyacyl-CoA + NAD(+) = a 3-oxoacyl-CoA + NADH + H(+)</text>
        <dbReference type="Rhea" id="RHEA:22432"/>
        <dbReference type="ChEBI" id="CHEBI:15378"/>
        <dbReference type="ChEBI" id="CHEBI:57318"/>
        <dbReference type="ChEBI" id="CHEBI:57540"/>
        <dbReference type="ChEBI" id="CHEBI:57945"/>
        <dbReference type="ChEBI" id="CHEBI:90726"/>
        <dbReference type="EC" id="1.1.1.35"/>
    </reaction>
</comment>
<comment type="catalytic activity">
    <reaction evidence="1">
        <text>a (3S)-3-hydroxyacyl-CoA = a (2E)-enoyl-CoA + H2O</text>
        <dbReference type="Rhea" id="RHEA:16105"/>
        <dbReference type="ChEBI" id="CHEBI:15377"/>
        <dbReference type="ChEBI" id="CHEBI:57318"/>
        <dbReference type="ChEBI" id="CHEBI:58856"/>
        <dbReference type="EC" id="4.2.1.17"/>
    </reaction>
</comment>
<comment type="catalytic activity">
    <reaction evidence="1">
        <text>a 4-saturated-(3S)-3-hydroxyacyl-CoA = a (3E)-enoyl-CoA + H2O</text>
        <dbReference type="Rhea" id="RHEA:20724"/>
        <dbReference type="ChEBI" id="CHEBI:15377"/>
        <dbReference type="ChEBI" id="CHEBI:58521"/>
        <dbReference type="ChEBI" id="CHEBI:137480"/>
        <dbReference type="EC" id="4.2.1.17"/>
    </reaction>
</comment>
<comment type="catalytic activity">
    <reaction evidence="1">
        <text>(3S)-3-hydroxybutanoyl-CoA = (3R)-3-hydroxybutanoyl-CoA</text>
        <dbReference type="Rhea" id="RHEA:21760"/>
        <dbReference type="ChEBI" id="CHEBI:57315"/>
        <dbReference type="ChEBI" id="CHEBI:57316"/>
        <dbReference type="EC" id="5.1.2.3"/>
    </reaction>
</comment>
<comment type="catalytic activity">
    <reaction evidence="1">
        <text>a (3Z)-enoyl-CoA = a 4-saturated (2E)-enoyl-CoA</text>
        <dbReference type="Rhea" id="RHEA:45900"/>
        <dbReference type="ChEBI" id="CHEBI:85097"/>
        <dbReference type="ChEBI" id="CHEBI:85489"/>
        <dbReference type="EC" id="5.3.3.8"/>
    </reaction>
</comment>
<comment type="catalytic activity">
    <reaction evidence="1">
        <text>a (3E)-enoyl-CoA = a 4-saturated (2E)-enoyl-CoA</text>
        <dbReference type="Rhea" id="RHEA:45228"/>
        <dbReference type="ChEBI" id="CHEBI:58521"/>
        <dbReference type="ChEBI" id="CHEBI:85097"/>
        <dbReference type="EC" id="5.3.3.8"/>
    </reaction>
</comment>
<comment type="pathway">
    <text evidence="1">Lipid metabolism; fatty acid beta-oxidation.</text>
</comment>
<comment type="subunit">
    <text evidence="1">Heterotetramer of two alpha chains (FadB) and two beta chains (FadA).</text>
</comment>
<comment type="similarity">
    <text evidence="1">In the N-terminal section; belongs to the enoyl-CoA hydratase/isomerase family.</text>
</comment>
<comment type="similarity">
    <text evidence="1">In the C-terminal section; belongs to the 3-hydroxyacyl-CoA dehydrogenase family.</text>
</comment>
<reference key="1">
    <citation type="journal article" date="2009" name="PLoS Genet.">
        <title>Organised genome dynamics in the Escherichia coli species results in highly diverse adaptive paths.</title>
        <authorList>
            <person name="Touchon M."/>
            <person name="Hoede C."/>
            <person name="Tenaillon O."/>
            <person name="Barbe V."/>
            <person name="Baeriswyl S."/>
            <person name="Bidet P."/>
            <person name="Bingen E."/>
            <person name="Bonacorsi S."/>
            <person name="Bouchier C."/>
            <person name="Bouvet O."/>
            <person name="Calteau A."/>
            <person name="Chiapello H."/>
            <person name="Clermont O."/>
            <person name="Cruveiller S."/>
            <person name="Danchin A."/>
            <person name="Diard M."/>
            <person name="Dossat C."/>
            <person name="Karoui M.E."/>
            <person name="Frapy E."/>
            <person name="Garry L."/>
            <person name="Ghigo J.M."/>
            <person name="Gilles A.M."/>
            <person name="Johnson J."/>
            <person name="Le Bouguenec C."/>
            <person name="Lescat M."/>
            <person name="Mangenot S."/>
            <person name="Martinez-Jehanne V."/>
            <person name="Matic I."/>
            <person name="Nassif X."/>
            <person name="Oztas S."/>
            <person name="Petit M.A."/>
            <person name="Pichon C."/>
            <person name="Rouy Z."/>
            <person name="Ruf C.S."/>
            <person name="Schneider D."/>
            <person name="Tourret J."/>
            <person name="Vacherie B."/>
            <person name="Vallenet D."/>
            <person name="Medigue C."/>
            <person name="Rocha E.P.C."/>
            <person name="Denamur E."/>
        </authorList>
    </citation>
    <scope>NUCLEOTIDE SEQUENCE [LARGE SCALE GENOMIC DNA]</scope>
    <source>
        <strain>55989 / EAEC</strain>
    </source>
</reference>
<organism>
    <name type="scientific">Escherichia coli (strain 55989 / EAEC)</name>
    <dbReference type="NCBI Taxonomy" id="585055"/>
    <lineage>
        <taxon>Bacteria</taxon>
        <taxon>Pseudomonadati</taxon>
        <taxon>Pseudomonadota</taxon>
        <taxon>Gammaproteobacteria</taxon>
        <taxon>Enterobacterales</taxon>
        <taxon>Enterobacteriaceae</taxon>
        <taxon>Escherichia</taxon>
    </lineage>
</organism>
<evidence type="ECO:0000255" key="1">
    <source>
        <dbReference type="HAMAP-Rule" id="MF_01621"/>
    </source>
</evidence>
<evidence type="ECO:0000256" key="2">
    <source>
        <dbReference type="SAM" id="MobiDB-lite"/>
    </source>
</evidence>
<dbReference type="EC" id="4.2.1.17" evidence="1"/>
<dbReference type="EC" id="5.1.2.3" evidence="1"/>
<dbReference type="EC" id="5.3.3.8" evidence="1"/>
<dbReference type="EC" id="1.1.1.35" evidence="1"/>
<dbReference type="EMBL" id="CU928145">
    <property type="protein sequence ID" value="CAV00999.1"/>
    <property type="molecule type" value="Genomic_DNA"/>
</dbReference>
<dbReference type="RefSeq" id="WP_000965943.1">
    <property type="nucleotide sequence ID" value="NC_011748.1"/>
</dbReference>
<dbReference type="SMR" id="B7L9A7"/>
<dbReference type="KEGG" id="eck:EC55989_4321"/>
<dbReference type="HOGENOM" id="CLU_009834_16_3_6"/>
<dbReference type="UniPathway" id="UPA00659"/>
<dbReference type="Proteomes" id="UP000000746">
    <property type="component" value="Chromosome"/>
</dbReference>
<dbReference type="GO" id="GO:0036125">
    <property type="term" value="C:fatty acid beta-oxidation multienzyme complex"/>
    <property type="evidence" value="ECO:0007669"/>
    <property type="project" value="InterPro"/>
</dbReference>
<dbReference type="GO" id="GO:0008692">
    <property type="term" value="F:3-hydroxybutyryl-CoA epimerase activity"/>
    <property type="evidence" value="ECO:0007669"/>
    <property type="project" value="UniProtKB-UniRule"/>
</dbReference>
<dbReference type="GO" id="GO:0004165">
    <property type="term" value="F:delta(3)-delta(2)-enoyl-CoA isomerase activity"/>
    <property type="evidence" value="ECO:0007669"/>
    <property type="project" value="UniProtKB-UniRule"/>
</dbReference>
<dbReference type="GO" id="GO:0004300">
    <property type="term" value="F:enoyl-CoA hydratase activity"/>
    <property type="evidence" value="ECO:0007669"/>
    <property type="project" value="UniProtKB-UniRule"/>
</dbReference>
<dbReference type="GO" id="GO:0016509">
    <property type="term" value="F:long-chain-3-hydroxyacyl-CoA dehydrogenase activity"/>
    <property type="evidence" value="ECO:0007669"/>
    <property type="project" value="TreeGrafter"/>
</dbReference>
<dbReference type="GO" id="GO:0070403">
    <property type="term" value="F:NAD+ binding"/>
    <property type="evidence" value="ECO:0007669"/>
    <property type="project" value="InterPro"/>
</dbReference>
<dbReference type="GO" id="GO:0006635">
    <property type="term" value="P:fatty acid beta-oxidation"/>
    <property type="evidence" value="ECO:0007669"/>
    <property type="project" value="UniProtKB-UniRule"/>
</dbReference>
<dbReference type="CDD" id="cd06558">
    <property type="entry name" value="crotonase-like"/>
    <property type="match status" value="1"/>
</dbReference>
<dbReference type="FunFam" id="1.10.1040.50:FF:000001">
    <property type="entry name" value="Fatty acid oxidation complex subunit alpha"/>
    <property type="match status" value="1"/>
</dbReference>
<dbReference type="FunFam" id="3.90.226.10:FF:000018">
    <property type="entry name" value="Fatty acid oxidation complex subunit alpha"/>
    <property type="match status" value="1"/>
</dbReference>
<dbReference type="FunFam" id="3.40.50.720:FF:000009">
    <property type="entry name" value="Fatty oxidation complex, alpha subunit"/>
    <property type="match status" value="1"/>
</dbReference>
<dbReference type="Gene3D" id="1.10.1040.50">
    <property type="match status" value="1"/>
</dbReference>
<dbReference type="Gene3D" id="3.90.226.10">
    <property type="entry name" value="2-enoyl-CoA Hydratase, Chain A, domain 1"/>
    <property type="match status" value="1"/>
</dbReference>
<dbReference type="Gene3D" id="3.40.50.720">
    <property type="entry name" value="NAD(P)-binding Rossmann-like Domain"/>
    <property type="match status" value="1"/>
</dbReference>
<dbReference type="HAMAP" id="MF_01621">
    <property type="entry name" value="FadB"/>
    <property type="match status" value="1"/>
</dbReference>
<dbReference type="InterPro" id="IPR006180">
    <property type="entry name" value="3-OHacyl-CoA_DH_CS"/>
</dbReference>
<dbReference type="InterPro" id="IPR006176">
    <property type="entry name" value="3-OHacyl-CoA_DH_NAD-bd"/>
</dbReference>
<dbReference type="InterPro" id="IPR006108">
    <property type="entry name" value="3HC_DH_C"/>
</dbReference>
<dbReference type="InterPro" id="IPR008927">
    <property type="entry name" value="6-PGluconate_DH-like_C_sf"/>
</dbReference>
<dbReference type="InterPro" id="IPR029045">
    <property type="entry name" value="ClpP/crotonase-like_dom_sf"/>
</dbReference>
<dbReference type="InterPro" id="IPR018376">
    <property type="entry name" value="Enoyl-CoA_hyd/isom_CS"/>
</dbReference>
<dbReference type="InterPro" id="IPR001753">
    <property type="entry name" value="Enoyl-CoA_hydra/iso"/>
</dbReference>
<dbReference type="InterPro" id="IPR050136">
    <property type="entry name" value="FA_oxidation_alpha_subunit"/>
</dbReference>
<dbReference type="InterPro" id="IPR012799">
    <property type="entry name" value="FadB"/>
</dbReference>
<dbReference type="InterPro" id="IPR036291">
    <property type="entry name" value="NAD(P)-bd_dom_sf"/>
</dbReference>
<dbReference type="NCBIfam" id="TIGR02437">
    <property type="entry name" value="FadB"/>
    <property type="match status" value="1"/>
</dbReference>
<dbReference type="NCBIfam" id="NF008727">
    <property type="entry name" value="PRK11730.1"/>
    <property type="match status" value="1"/>
</dbReference>
<dbReference type="PANTHER" id="PTHR43612">
    <property type="entry name" value="TRIFUNCTIONAL ENZYME SUBUNIT ALPHA"/>
    <property type="match status" value="1"/>
</dbReference>
<dbReference type="PANTHER" id="PTHR43612:SF3">
    <property type="entry name" value="TRIFUNCTIONAL ENZYME SUBUNIT ALPHA, MITOCHONDRIAL"/>
    <property type="match status" value="1"/>
</dbReference>
<dbReference type="Pfam" id="PF00725">
    <property type="entry name" value="3HCDH"/>
    <property type="match status" value="2"/>
</dbReference>
<dbReference type="Pfam" id="PF02737">
    <property type="entry name" value="3HCDH_N"/>
    <property type="match status" value="1"/>
</dbReference>
<dbReference type="Pfam" id="PF00378">
    <property type="entry name" value="ECH_1"/>
    <property type="match status" value="1"/>
</dbReference>
<dbReference type="SUPFAM" id="SSF48179">
    <property type="entry name" value="6-phosphogluconate dehydrogenase C-terminal domain-like"/>
    <property type="match status" value="2"/>
</dbReference>
<dbReference type="SUPFAM" id="SSF52096">
    <property type="entry name" value="ClpP/crotonase"/>
    <property type="match status" value="1"/>
</dbReference>
<dbReference type="SUPFAM" id="SSF51735">
    <property type="entry name" value="NAD(P)-binding Rossmann-fold domains"/>
    <property type="match status" value="1"/>
</dbReference>
<dbReference type="PROSITE" id="PS00067">
    <property type="entry name" value="3HCDH"/>
    <property type="match status" value="1"/>
</dbReference>
<dbReference type="PROSITE" id="PS00166">
    <property type="entry name" value="ENOYL_COA_HYDRATASE"/>
    <property type="match status" value="1"/>
</dbReference>
<sequence length="729" mass="79549">MLYKGDTLYLDWLEDGIAELVFDAPGSVNKLDTATVASLGEAIGVLEQQSDLKGLLLRSNKAAFIVGADITEFLSLFLVPEEQLSQWLHFANSVFNRLEDLPVPTIAAVNGYALGGGCECVLATDYRLATPDLRIGLPETKLGIMPGFGGSVRMPRMLGADSALEIIAAGKDVGADQALKIGLVDGVVKAEKLVEGAKAVLRQAINGDLDWKAKRQPKLEPLKLSKIEATMSFTIAKGMVAQTAGKHYPAPITAVKTIEAAARFGREEALNLENKSFVPLAHTNEARALVGIFLNDQYVKGKAKKLTKDVETPKQAAVLGAGIMGGGIAYQSAWKGVPVVMKDINDKSLTLGMTEAAKLLNKQLERGKIDGLKLAGVISTIHPTLDYAGFDRVDVVVEAVVENPKVKKAVLAETEQKVRPDTVLASNTSTIPISELANALERPENFCGMHFFNPVHRMPLVEIIRGEKSSDETIAKVVAWASKMGKTPIVVNDCPGFFVNRVLFPYFAGFSQLLRDGADFRKIDKVMEKQFGWPMGPAYLLDVVGIDTAHHAQAVMAAGFPQRMQKDYRDAIDALFDANRFGQKNGLGFWRYKEDSKGKPKKEEDAAVEDLLAEVSQPKRDFSEEEIIARMMIPMVNEVVRCLEEGIIATPAEADMALVYGLGFPPFHGGAFRWLDTLGSAKYLDMAQQYQHLGPLYEVPEGLRNKARHNEPYYPPVEPARPVGDLKTA</sequence>
<proteinExistence type="inferred from homology"/>
<name>FADB_ECO55</name>
<protein>
    <recommendedName>
        <fullName evidence="1">Fatty acid oxidation complex subunit alpha</fullName>
    </recommendedName>
    <domain>
        <recommendedName>
            <fullName evidence="1">Enoyl-CoA hydratase/Delta(3)-cis-Delta(2)-trans-enoyl-CoA isomerase/3-hydroxybutyryl-CoA epimerase</fullName>
            <ecNumber evidence="1">4.2.1.17</ecNumber>
            <ecNumber evidence="1">5.1.2.3</ecNumber>
            <ecNumber evidence="1">5.3.3.8</ecNumber>
        </recommendedName>
    </domain>
    <domain>
        <recommendedName>
            <fullName evidence="1">3-hydroxyacyl-CoA dehydrogenase</fullName>
            <ecNumber evidence="1">1.1.1.35</ecNumber>
        </recommendedName>
    </domain>
</protein>
<keyword id="KW-0276">Fatty acid metabolism</keyword>
<keyword id="KW-0413">Isomerase</keyword>
<keyword id="KW-0442">Lipid degradation</keyword>
<keyword id="KW-0443">Lipid metabolism</keyword>
<keyword id="KW-0456">Lyase</keyword>
<keyword id="KW-0511">Multifunctional enzyme</keyword>
<keyword id="KW-0520">NAD</keyword>
<keyword id="KW-0560">Oxidoreductase</keyword>
<keyword id="KW-1185">Reference proteome</keyword>
<feature type="chain" id="PRO_1000186034" description="Fatty acid oxidation complex subunit alpha">
    <location>
        <begin position="1"/>
        <end position="729"/>
    </location>
</feature>
<feature type="region of interest" description="Enoyl-CoA hydratase/isomerase" evidence="1">
    <location>
        <begin position="1"/>
        <end position="189"/>
    </location>
</feature>
<feature type="region of interest" description="3-hydroxyacyl-CoA dehydrogenase" evidence="1">
    <location>
        <begin position="311"/>
        <end position="729"/>
    </location>
</feature>
<feature type="region of interest" description="Disordered" evidence="2">
    <location>
        <begin position="708"/>
        <end position="729"/>
    </location>
</feature>
<feature type="active site" description="For 3-hydroxyacyl-CoA dehydrogenase activity" evidence="1">
    <location>
        <position position="450"/>
    </location>
</feature>
<feature type="binding site" evidence="1">
    <location>
        <position position="296"/>
    </location>
    <ligand>
        <name>substrate</name>
    </ligand>
</feature>
<feature type="binding site" evidence="1">
    <location>
        <position position="324"/>
    </location>
    <ligand>
        <name>NAD(+)</name>
        <dbReference type="ChEBI" id="CHEBI:57540"/>
    </ligand>
</feature>
<feature type="binding site" evidence="1">
    <location>
        <position position="343"/>
    </location>
    <ligand>
        <name>NAD(+)</name>
        <dbReference type="ChEBI" id="CHEBI:57540"/>
    </ligand>
</feature>
<feature type="binding site" evidence="1">
    <location>
        <begin position="400"/>
        <end position="402"/>
    </location>
    <ligand>
        <name>NAD(+)</name>
        <dbReference type="ChEBI" id="CHEBI:57540"/>
    </ligand>
</feature>
<feature type="binding site" evidence="1">
    <location>
        <position position="407"/>
    </location>
    <ligand>
        <name>NAD(+)</name>
        <dbReference type="ChEBI" id="CHEBI:57540"/>
    </ligand>
</feature>
<feature type="binding site" evidence="1">
    <location>
        <position position="429"/>
    </location>
    <ligand>
        <name>NAD(+)</name>
        <dbReference type="ChEBI" id="CHEBI:57540"/>
    </ligand>
</feature>
<feature type="binding site" evidence="1">
    <location>
        <position position="453"/>
    </location>
    <ligand>
        <name>NAD(+)</name>
        <dbReference type="ChEBI" id="CHEBI:57540"/>
    </ligand>
</feature>
<feature type="binding site" evidence="1">
    <location>
        <position position="500"/>
    </location>
    <ligand>
        <name>substrate</name>
    </ligand>
</feature>
<feature type="binding site" evidence="1">
    <location>
        <position position="660"/>
    </location>
    <ligand>
        <name>substrate</name>
    </ligand>
</feature>
<feature type="site" description="Important for catalytic activity" evidence="1">
    <location>
        <position position="119"/>
    </location>
</feature>
<feature type="site" description="Important for catalytic activity" evidence="1">
    <location>
        <position position="139"/>
    </location>
</feature>
<gene>
    <name evidence="1" type="primary">fadB</name>
    <name type="ordered locus">EC55989_4321</name>
</gene>